<feature type="chain" id="PRO_1000186858" description="UPF0509 protein YciZ">
    <location>
        <begin position="1"/>
        <end position="59"/>
    </location>
</feature>
<evidence type="ECO:0000255" key="1">
    <source>
        <dbReference type="HAMAP-Rule" id="MF_01641"/>
    </source>
</evidence>
<organism>
    <name type="scientific">Salmonella schwarzengrund (strain CVM19633)</name>
    <dbReference type="NCBI Taxonomy" id="439843"/>
    <lineage>
        <taxon>Bacteria</taxon>
        <taxon>Pseudomonadati</taxon>
        <taxon>Pseudomonadota</taxon>
        <taxon>Gammaproteobacteria</taxon>
        <taxon>Enterobacterales</taxon>
        <taxon>Enterobacteriaceae</taxon>
        <taxon>Salmonella</taxon>
    </lineage>
</organism>
<accession>B4TX13</accession>
<dbReference type="EMBL" id="CP001127">
    <property type="protein sequence ID" value="ACF92797.1"/>
    <property type="molecule type" value="Genomic_DNA"/>
</dbReference>
<dbReference type="RefSeq" id="WP_001279854.1">
    <property type="nucleotide sequence ID" value="NC_011094.1"/>
</dbReference>
<dbReference type="KEGG" id="sew:SeSA_A1832"/>
<dbReference type="HOGENOM" id="CLU_180697_1_0_6"/>
<dbReference type="Proteomes" id="UP000001865">
    <property type="component" value="Chromosome"/>
</dbReference>
<dbReference type="HAMAP" id="MF_01641">
    <property type="entry name" value="UPF0509"/>
    <property type="match status" value="1"/>
</dbReference>
<dbReference type="InterPro" id="IPR020887">
    <property type="entry name" value="UPF0509"/>
</dbReference>
<dbReference type="NCBIfam" id="NF010179">
    <property type="entry name" value="PRK13658.1"/>
    <property type="match status" value="1"/>
</dbReference>
<dbReference type="Pfam" id="PF23675">
    <property type="entry name" value="YciZ"/>
    <property type="match status" value="1"/>
</dbReference>
<proteinExistence type="inferred from homology"/>
<protein>
    <recommendedName>
        <fullName evidence="1">UPF0509 protein YciZ</fullName>
    </recommendedName>
</protein>
<reference key="1">
    <citation type="journal article" date="2011" name="J. Bacteriol.">
        <title>Comparative genomics of 28 Salmonella enterica isolates: evidence for CRISPR-mediated adaptive sublineage evolution.</title>
        <authorList>
            <person name="Fricke W.F."/>
            <person name="Mammel M.K."/>
            <person name="McDermott P.F."/>
            <person name="Tartera C."/>
            <person name="White D.G."/>
            <person name="Leclerc J.E."/>
            <person name="Ravel J."/>
            <person name="Cebula T.A."/>
        </authorList>
    </citation>
    <scope>NUCLEOTIDE SEQUENCE [LARGE SCALE GENOMIC DNA]</scope>
    <source>
        <strain>CVM19633</strain>
    </source>
</reference>
<gene>
    <name evidence="1" type="primary">yciZ</name>
    <name type="ordered locus">SeSA_A1832</name>
</gene>
<sequence length="59" mass="6430">MSDIEAQRIAARIDTVLDILVAGDYHSAINNLEILRAELLDQVKDGISPSQAPGSPWEI</sequence>
<name>YCIZ_SALSV</name>
<comment type="similarity">
    <text evidence="1">Belongs to the UPF0509 family.</text>
</comment>